<proteinExistence type="evidence at transcript level"/>
<organism>
    <name type="scientific">Bos taurus</name>
    <name type="common">Bovine</name>
    <dbReference type="NCBI Taxonomy" id="9913"/>
    <lineage>
        <taxon>Eukaryota</taxon>
        <taxon>Metazoa</taxon>
        <taxon>Chordata</taxon>
        <taxon>Craniata</taxon>
        <taxon>Vertebrata</taxon>
        <taxon>Euteleostomi</taxon>
        <taxon>Mammalia</taxon>
        <taxon>Eutheria</taxon>
        <taxon>Laurasiatheria</taxon>
        <taxon>Artiodactyla</taxon>
        <taxon>Ruminantia</taxon>
        <taxon>Pecora</taxon>
        <taxon>Bovidae</taxon>
        <taxon>Bovinae</taxon>
        <taxon>Bos</taxon>
    </lineage>
</organism>
<reference key="1">
    <citation type="submission" date="2006-06" db="EMBL/GenBank/DDBJ databases">
        <authorList>
            <consortium name="NIH - Mammalian Gene Collection (MGC) project"/>
        </authorList>
    </citation>
    <scope>NUCLEOTIDE SEQUENCE [LARGE SCALE MRNA]</scope>
    <source>
        <strain>Hereford</strain>
        <tissue>Fetal liver</tissue>
    </source>
</reference>
<protein>
    <recommendedName>
        <fullName>Vesicle-associated membrane protein 7</fullName>
        <shortName>VAMP-7</shortName>
    </recommendedName>
    <alternativeName>
        <fullName>Synaptobrevin-like protein 1</fullName>
    </alternativeName>
</protein>
<keyword id="KW-0007">Acetylation</keyword>
<keyword id="KW-0175">Coiled coil</keyword>
<keyword id="KW-0968">Cytoplasmic vesicle</keyword>
<keyword id="KW-0256">Endoplasmic reticulum</keyword>
<keyword id="KW-0967">Endosome</keyword>
<keyword id="KW-0268">Exocytosis</keyword>
<keyword id="KW-0333">Golgi apparatus</keyword>
<keyword id="KW-0458">Lysosome</keyword>
<keyword id="KW-0472">Membrane</keyword>
<keyword id="KW-0597">Phosphoprotein</keyword>
<keyword id="KW-0653">Protein transport</keyword>
<keyword id="KW-1185">Reference proteome</keyword>
<keyword id="KW-0735">Signal-anchor</keyword>
<keyword id="KW-0770">Synapse</keyword>
<keyword id="KW-0771">Synaptosome</keyword>
<keyword id="KW-0812">Transmembrane</keyword>
<keyword id="KW-1133">Transmembrane helix</keyword>
<keyword id="KW-0813">Transport</keyword>
<dbReference type="EMBL" id="BC118341">
    <property type="protein sequence ID" value="AAI18342.1"/>
    <property type="molecule type" value="mRNA"/>
</dbReference>
<dbReference type="RefSeq" id="NP_001069770.1">
    <property type="nucleotide sequence ID" value="NM_001076302.1"/>
</dbReference>
<dbReference type="BMRB" id="Q17QI5"/>
<dbReference type="SMR" id="Q17QI5"/>
<dbReference type="FunCoup" id="Q17QI5">
    <property type="interactions" value="1708"/>
</dbReference>
<dbReference type="STRING" id="9913.ENSBTAP00000066954"/>
<dbReference type="GeneID" id="613984"/>
<dbReference type="KEGG" id="bta:613984"/>
<dbReference type="CTD" id="6845"/>
<dbReference type="InParanoid" id="Q17QI5"/>
<dbReference type="OrthoDB" id="248747at2759"/>
<dbReference type="Proteomes" id="UP000009136">
    <property type="component" value="Unplaced"/>
</dbReference>
<dbReference type="GO" id="GO:0005789">
    <property type="term" value="C:endoplasmic reticulum membrane"/>
    <property type="evidence" value="ECO:0000250"/>
    <property type="project" value="UniProtKB"/>
</dbReference>
<dbReference type="GO" id="GO:0005794">
    <property type="term" value="C:Golgi apparatus"/>
    <property type="evidence" value="ECO:0007669"/>
    <property type="project" value="UniProtKB-SubCell"/>
</dbReference>
<dbReference type="GO" id="GO:0031902">
    <property type="term" value="C:late endosome membrane"/>
    <property type="evidence" value="ECO:0000250"/>
    <property type="project" value="UniProtKB"/>
</dbReference>
<dbReference type="GO" id="GO:0005765">
    <property type="term" value="C:lysosomal membrane"/>
    <property type="evidence" value="ECO:0000250"/>
    <property type="project" value="UniProtKB"/>
</dbReference>
<dbReference type="GO" id="GO:0043005">
    <property type="term" value="C:neuron projection"/>
    <property type="evidence" value="ECO:0000250"/>
    <property type="project" value="UniProtKB"/>
</dbReference>
<dbReference type="GO" id="GO:0045335">
    <property type="term" value="C:phagocytic vesicle"/>
    <property type="evidence" value="ECO:0000250"/>
    <property type="project" value="UniProtKB"/>
</dbReference>
<dbReference type="GO" id="GO:0030670">
    <property type="term" value="C:phagocytic vesicle membrane"/>
    <property type="evidence" value="ECO:0007669"/>
    <property type="project" value="UniProtKB-SubCell"/>
</dbReference>
<dbReference type="GO" id="GO:0031201">
    <property type="term" value="C:SNARE complex"/>
    <property type="evidence" value="ECO:0000250"/>
    <property type="project" value="UniProtKB"/>
</dbReference>
<dbReference type="GO" id="GO:0045202">
    <property type="term" value="C:synapse"/>
    <property type="evidence" value="ECO:0007669"/>
    <property type="project" value="UniProtKB-SubCell"/>
</dbReference>
<dbReference type="GO" id="GO:0030658">
    <property type="term" value="C:transport vesicle membrane"/>
    <property type="evidence" value="ECO:0007669"/>
    <property type="project" value="UniProtKB-SubCell"/>
</dbReference>
<dbReference type="GO" id="GO:0005484">
    <property type="term" value="F:SNAP receptor activity"/>
    <property type="evidence" value="ECO:0000318"/>
    <property type="project" value="GO_Central"/>
</dbReference>
<dbReference type="GO" id="GO:0000149">
    <property type="term" value="F:SNARE binding"/>
    <property type="evidence" value="ECO:0000318"/>
    <property type="project" value="GO_Central"/>
</dbReference>
<dbReference type="GO" id="GO:0017156">
    <property type="term" value="P:calcium-ion regulated exocytosis"/>
    <property type="evidence" value="ECO:0000250"/>
    <property type="project" value="UniProtKB"/>
</dbReference>
<dbReference type="GO" id="GO:0006888">
    <property type="term" value="P:endoplasmic reticulum to Golgi vesicle-mediated transport"/>
    <property type="evidence" value="ECO:0000250"/>
    <property type="project" value="UniProtKB"/>
</dbReference>
<dbReference type="GO" id="GO:0008333">
    <property type="term" value="P:endosome to lysosome transport"/>
    <property type="evidence" value="ECO:0000250"/>
    <property type="project" value="UniProtKB"/>
</dbReference>
<dbReference type="GO" id="GO:0043308">
    <property type="term" value="P:eosinophil degranulation"/>
    <property type="evidence" value="ECO:0000250"/>
    <property type="project" value="UniProtKB"/>
</dbReference>
<dbReference type="GO" id="GO:0006887">
    <property type="term" value="P:exocytosis"/>
    <property type="evidence" value="ECO:0000318"/>
    <property type="project" value="GO_Central"/>
</dbReference>
<dbReference type="GO" id="GO:0043312">
    <property type="term" value="P:neutrophil degranulation"/>
    <property type="evidence" value="ECO:0000250"/>
    <property type="project" value="UniProtKB"/>
</dbReference>
<dbReference type="GO" id="GO:0006911">
    <property type="term" value="P:phagocytosis, engulfment"/>
    <property type="evidence" value="ECO:0000250"/>
    <property type="project" value="UniProtKB"/>
</dbReference>
<dbReference type="GO" id="GO:0015031">
    <property type="term" value="P:protein transport"/>
    <property type="evidence" value="ECO:0007669"/>
    <property type="project" value="UniProtKB-KW"/>
</dbReference>
<dbReference type="GO" id="GO:0006906">
    <property type="term" value="P:vesicle fusion"/>
    <property type="evidence" value="ECO:0000250"/>
    <property type="project" value="UniProtKB"/>
</dbReference>
<dbReference type="GO" id="GO:0016192">
    <property type="term" value="P:vesicle-mediated transport"/>
    <property type="evidence" value="ECO:0000250"/>
    <property type="project" value="UniProtKB"/>
</dbReference>
<dbReference type="CDD" id="cd14824">
    <property type="entry name" value="Longin"/>
    <property type="match status" value="1"/>
</dbReference>
<dbReference type="CDD" id="cd15871">
    <property type="entry name" value="R-SNARE_VAMP7"/>
    <property type="match status" value="1"/>
</dbReference>
<dbReference type="FunFam" id="1.20.5.110:FF:000004">
    <property type="entry name" value="Vesicle-associated membrane protein 7"/>
    <property type="match status" value="1"/>
</dbReference>
<dbReference type="FunFam" id="3.30.450.50:FF:000006">
    <property type="entry name" value="Vesicle-associated membrane protein 7"/>
    <property type="match status" value="1"/>
</dbReference>
<dbReference type="Gene3D" id="1.20.5.110">
    <property type="match status" value="1"/>
</dbReference>
<dbReference type="Gene3D" id="3.30.450.50">
    <property type="entry name" value="Longin domain"/>
    <property type="match status" value="1"/>
</dbReference>
<dbReference type="InterPro" id="IPR011012">
    <property type="entry name" value="Longin-like_dom_sf"/>
</dbReference>
<dbReference type="InterPro" id="IPR010908">
    <property type="entry name" value="Longin_dom"/>
</dbReference>
<dbReference type="InterPro" id="IPR001388">
    <property type="entry name" value="Synaptobrevin-like"/>
</dbReference>
<dbReference type="InterPro" id="IPR051097">
    <property type="entry name" value="Synaptobrevin-like_transport"/>
</dbReference>
<dbReference type="InterPro" id="IPR042855">
    <property type="entry name" value="V_SNARE_CC"/>
</dbReference>
<dbReference type="PANTHER" id="PTHR21136">
    <property type="entry name" value="SNARE PROTEINS"/>
    <property type="match status" value="1"/>
</dbReference>
<dbReference type="PANTHER" id="PTHR21136:SF196">
    <property type="entry name" value="VESICLE-ASSOCIATED MEMBRANE PROTEIN 7"/>
    <property type="match status" value="1"/>
</dbReference>
<dbReference type="Pfam" id="PF13774">
    <property type="entry name" value="Longin"/>
    <property type="match status" value="1"/>
</dbReference>
<dbReference type="Pfam" id="PF00957">
    <property type="entry name" value="Synaptobrevin"/>
    <property type="match status" value="1"/>
</dbReference>
<dbReference type="PRINTS" id="PR00219">
    <property type="entry name" value="SYNAPTOBREVN"/>
</dbReference>
<dbReference type="SMART" id="SM01270">
    <property type="entry name" value="Longin"/>
    <property type="match status" value="1"/>
</dbReference>
<dbReference type="SUPFAM" id="SSF58038">
    <property type="entry name" value="SNARE fusion complex"/>
    <property type="match status" value="1"/>
</dbReference>
<dbReference type="SUPFAM" id="SSF64356">
    <property type="entry name" value="SNARE-like"/>
    <property type="match status" value="1"/>
</dbReference>
<dbReference type="PROSITE" id="PS50859">
    <property type="entry name" value="LONGIN"/>
    <property type="match status" value="1"/>
</dbReference>
<dbReference type="PROSITE" id="PS00417">
    <property type="entry name" value="SYNAPTOBREVIN"/>
    <property type="match status" value="1"/>
</dbReference>
<dbReference type="PROSITE" id="PS50892">
    <property type="entry name" value="V_SNARE"/>
    <property type="match status" value="1"/>
</dbReference>
<feature type="initiator methionine" description="Removed" evidence="2">
    <location>
        <position position="1"/>
    </location>
</feature>
<feature type="chain" id="PRO_0000284056" description="Vesicle-associated membrane protein 7">
    <location>
        <begin position="2"/>
        <end position="220"/>
    </location>
</feature>
<feature type="topological domain" description="Cytoplasmic" evidence="4">
    <location>
        <begin position="2"/>
        <end position="188"/>
    </location>
</feature>
<feature type="transmembrane region" description="Helical; Anchor for type IV membrane protein" evidence="4">
    <location>
        <begin position="189"/>
        <end position="209"/>
    </location>
</feature>
<feature type="topological domain" description="Vesicular" evidence="4">
    <location>
        <begin position="210"/>
        <end position="220"/>
    </location>
</feature>
<feature type="domain" description="Longin" evidence="5">
    <location>
        <begin position="7"/>
        <end position="110"/>
    </location>
</feature>
<feature type="domain" description="v-SNARE coiled-coil homology" evidence="6">
    <location>
        <begin position="125"/>
        <end position="185"/>
    </location>
</feature>
<feature type="modified residue" description="N-acetylalanine" evidence="2">
    <location>
        <position position="2"/>
    </location>
</feature>
<feature type="modified residue" description="Phosphoserine" evidence="2">
    <location>
        <position position="167"/>
    </location>
</feature>
<feature type="modified residue" description="Phosphoserine" evidence="3">
    <location>
        <position position="168"/>
    </location>
</feature>
<sequence>MAILFAVVARGTTILAKHAWCGGNFLEVTEQILAKIPSENNKLTYSHGNYLFHYICQDRIVYLCITDDDFERSRAFNFLNEIKKRFQTTYGSRAQTALPYAMNSEFSSVLAAQLKHHSENKGLDKVMETQAQVDELKGIMVRNIDLVAQRGERLELLIDKTENLVDSSVTFKTTSRNLARAMCMKNLKLTIIIIIISVVFIYIIVSPLCGGFTWPNCVKK</sequence>
<gene>
    <name type="primary">VAMP7</name>
    <name type="synonym">SYBL1</name>
</gene>
<comment type="function">
    <text evidence="1">Involved in the targeting and/or fusion of transport vesicles to their target membrane during transport of proteins from the early endosome to the lysosome. Required for heterotypic fusion of late endosomes with lysosomes and homotypic lysosomal fusion. Required for calcium regulated lysosomal exocytosis. Involved in the export of chylomicrons from the endoplasmic reticulum to the cis Golgi. Required for exocytosis of mediators during eosinophil and neutrophil degranulation, and target cell killing by natural killer cells. Required for focal exocytosis of late endocytic vesicles during phagosome formation (By similarity).</text>
</comment>
<comment type="subunit">
    <text evidence="1 2">Component of the SNARE complex composed of STX4, SNAP23 and VAMP7 that binds SYT7 during lysosomal exocytosis. Component of the SNARE complex composed of STX7, STX8, VAMP7 and VTI1B that is required for heterotypic fusion of late endosomes with lysosomes. May interact with STX17 (By similarity). Interacts with PICALM (By similarity). Interacts with RAB21 (By similarity).</text>
</comment>
<comment type="subcellular location">
    <subcellularLocation>
        <location evidence="1">Cytoplasmic vesicle</location>
        <location evidence="1">Secretory vesicle membrane</location>
        <topology evidence="1">Single-pass type IV membrane protein</topology>
    </subcellularLocation>
    <subcellularLocation>
        <location evidence="1">Golgi apparatus</location>
        <location evidence="1">trans-Golgi network membrane</location>
        <topology evidence="1">Single-pass type IV membrane protein</topology>
    </subcellularLocation>
    <subcellularLocation>
        <location evidence="1">Late endosome membrane</location>
        <topology evidence="1">Single-pass type IV membrane protein</topology>
    </subcellularLocation>
    <subcellularLocation>
        <location evidence="1">Lysosome membrane</location>
        <topology evidence="1">Single-pass type IV membrane protein</topology>
    </subcellularLocation>
    <subcellularLocation>
        <location evidence="1">Endoplasmic reticulum membrane</location>
        <topology evidence="1">Single-pass type IV membrane protein</topology>
    </subcellularLocation>
    <subcellularLocation>
        <location evidence="1">Cytoplasmic vesicle</location>
        <location evidence="1">Phagosome membrane</location>
        <topology evidence="1">Single-pass type IV membrane protein</topology>
    </subcellularLocation>
    <subcellularLocation>
        <location evidence="1">Synapse</location>
        <location evidence="1">Synaptosome</location>
    </subcellularLocation>
    <text evidence="1">In immature neurons expression is localized in vesicular structures in axons and dendrites while in mature neurons it is localized to the somatodendritic region. Colocalizes with LAMP1 in kidney cells. Localization to the endoplasmic reticulum membrane was observed in the intestine but not in liver or kidney (By similarity).</text>
</comment>
<comment type="similarity">
    <text evidence="7">Belongs to the synaptobrevin family.</text>
</comment>
<accession>Q17QI5</accession>
<name>VAMP7_BOVIN</name>
<evidence type="ECO:0000250" key="1"/>
<evidence type="ECO:0000250" key="2">
    <source>
        <dbReference type="UniProtKB" id="P51809"/>
    </source>
</evidence>
<evidence type="ECO:0000250" key="3">
    <source>
        <dbReference type="UniProtKB" id="P70280"/>
    </source>
</evidence>
<evidence type="ECO:0000255" key="4"/>
<evidence type="ECO:0000255" key="5">
    <source>
        <dbReference type="PROSITE-ProRule" id="PRU00231"/>
    </source>
</evidence>
<evidence type="ECO:0000255" key="6">
    <source>
        <dbReference type="PROSITE-ProRule" id="PRU00290"/>
    </source>
</evidence>
<evidence type="ECO:0000305" key="7"/>